<name>VRAR_STAA1</name>
<protein>
    <recommendedName>
        <fullName>Response regulator protein VraR</fullName>
    </recommendedName>
</protein>
<dbReference type="EMBL" id="AB035448">
    <property type="protein sequence ID" value="BAB03325.1"/>
    <property type="molecule type" value="Genomic_DNA"/>
</dbReference>
<dbReference type="EMBL" id="AP009324">
    <property type="protein sequence ID" value="BAF78752.1"/>
    <property type="molecule type" value="Genomic_DNA"/>
</dbReference>
<dbReference type="RefSeq" id="WP_000153535.1">
    <property type="nucleotide sequence ID" value="NC_009782.1"/>
</dbReference>
<dbReference type="SMR" id="P0C0Z1"/>
<dbReference type="KEGG" id="saw:SAHV_1869"/>
<dbReference type="HOGENOM" id="CLU_000445_90_10_9"/>
<dbReference type="GO" id="GO:0005737">
    <property type="term" value="C:cytoplasm"/>
    <property type="evidence" value="ECO:0007669"/>
    <property type="project" value="UniProtKB-SubCell"/>
</dbReference>
<dbReference type="GO" id="GO:0003677">
    <property type="term" value="F:DNA binding"/>
    <property type="evidence" value="ECO:0007669"/>
    <property type="project" value="UniProtKB-KW"/>
</dbReference>
<dbReference type="GO" id="GO:0000160">
    <property type="term" value="P:phosphorelay signal transduction system"/>
    <property type="evidence" value="ECO:0007669"/>
    <property type="project" value="UniProtKB-KW"/>
</dbReference>
<dbReference type="GO" id="GO:0006355">
    <property type="term" value="P:regulation of DNA-templated transcription"/>
    <property type="evidence" value="ECO:0007669"/>
    <property type="project" value="InterPro"/>
</dbReference>
<dbReference type="GO" id="GO:0046677">
    <property type="term" value="P:response to antibiotic"/>
    <property type="evidence" value="ECO:0007669"/>
    <property type="project" value="UniProtKB-KW"/>
</dbReference>
<dbReference type="CDD" id="cd06170">
    <property type="entry name" value="LuxR_C_like"/>
    <property type="match status" value="1"/>
</dbReference>
<dbReference type="CDD" id="cd17535">
    <property type="entry name" value="REC_NarL-like"/>
    <property type="match status" value="1"/>
</dbReference>
<dbReference type="Gene3D" id="3.40.50.2300">
    <property type="match status" value="1"/>
</dbReference>
<dbReference type="InterPro" id="IPR011006">
    <property type="entry name" value="CheY-like_superfamily"/>
</dbReference>
<dbReference type="InterPro" id="IPR016032">
    <property type="entry name" value="Sig_transdc_resp-reg_C-effctor"/>
</dbReference>
<dbReference type="InterPro" id="IPR001789">
    <property type="entry name" value="Sig_transdc_resp-reg_receiver"/>
</dbReference>
<dbReference type="InterPro" id="IPR000792">
    <property type="entry name" value="Tscrpt_reg_LuxR_C"/>
</dbReference>
<dbReference type="InterPro" id="IPR039420">
    <property type="entry name" value="WalR-like"/>
</dbReference>
<dbReference type="PANTHER" id="PTHR43214:SF37">
    <property type="entry name" value="TRANSCRIPTIONAL REGULATORY PROTEIN YDFI"/>
    <property type="match status" value="1"/>
</dbReference>
<dbReference type="PANTHER" id="PTHR43214">
    <property type="entry name" value="TWO-COMPONENT RESPONSE REGULATOR"/>
    <property type="match status" value="1"/>
</dbReference>
<dbReference type="Pfam" id="PF00196">
    <property type="entry name" value="GerE"/>
    <property type="match status" value="1"/>
</dbReference>
<dbReference type="Pfam" id="PF00072">
    <property type="entry name" value="Response_reg"/>
    <property type="match status" value="1"/>
</dbReference>
<dbReference type="PRINTS" id="PR00038">
    <property type="entry name" value="HTHLUXR"/>
</dbReference>
<dbReference type="SMART" id="SM00421">
    <property type="entry name" value="HTH_LUXR"/>
    <property type="match status" value="1"/>
</dbReference>
<dbReference type="SMART" id="SM00448">
    <property type="entry name" value="REC"/>
    <property type="match status" value="1"/>
</dbReference>
<dbReference type="SUPFAM" id="SSF46894">
    <property type="entry name" value="C-terminal effector domain of the bipartite response regulators"/>
    <property type="match status" value="1"/>
</dbReference>
<dbReference type="SUPFAM" id="SSF52172">
    <property type="entry name" value="CheY-like"/>
    <property type="match status" value="1"/>
</dbReference>
<dbReference type="PROSITE" id="PS50043">
    <property type="entry name" value="HTH_LUXR_2"/>
    <property type="match status" value="1"/>
</dbReference>
<dbReference type="PROSITE" id="PS50110">
    <property type="entry name" value="RESPONSE_REGULATORY"/>
    <property type="match status" value="1"/>
</dbReference>
<feature type="chain" id="PRO_0000081268" description="Response regulator protein VraR">
    <location>
        <begin position="1"/>
        <end position="209"/>
    </location>
</feature>
<feature type="domain" description="Response regulatory" evidence="2">
    <location>
        <begin position="4"/>
        <end position="120"/>
    </location>
</feature>
<feature type="domain" description="HTH luxR-type" evidence="3">
    <location>
        <begin position="141"/>
        <end position="206"/>
    </location>
</feature>
<feature type="DNA-binding region" description="H-T-H motif" evidence="3">
    <location>
        <begin position="165"/>
        <end position="184"/>
    </location>
</feature>
<feature type="modified residue" description="4-aspartylphosphate" evidence="2">
    <location>
        <position position="55"/>
    </location>
</feature>
<keyword id="KW-0010">Activator</keyword>
<keyword id="KW-0046">Antibiotic resistance</keyword>
<keyword id="KW-0963">Cytoplasm</keyword>
<keyword id="KW-0238">DNA-binding</keyword>
<keyword id="KW-0597">Phosphoprotein</keyword>
<keyword id="KW-0804">Transcription</keyword>
<keyword id="KW-0805">Transcription regulation</keyword>
<keyword id="KW-0902">Two-component regulatory system</keyword>
<comment type="function">
    <text evidence="4 5 6">Member of the two-component regulatory system VraS/VraR involved in the control of the cell wall peptidoglycan biosynthesis. Upon cellular stress, the histidine kinase VraS transfers the phosphoryl group onto VraR. Upon phosphorylation, VraR dimerizes at the N-terminal domain. In turn, phosphorylation-induced dimerization expands and enhances the VraR binding to its own promoter leading to increased expression and subsequent modulation of as many as 40 genes, which ultimately constitute the S.aureus response to cell wall damage (PubMed:10708580). In addition, inhibits the host autophagic flux and delays the early stage of autophagosome formation, thereby promoting bacterial survival. Facilitates the ability of S.aureus to resist host polymorphonuclear leukocytes-mediated phagocytosis and killing thus contributing to immune evasion (PubMed:31009806, PubMed:31214151).</text>
</comment>
<comment type="subunit">
    <text evidence="1">Homodimer.</text>
</comment>
<comment type="subcellular location">
    <subcellularLocation>
        <location evidence="7">Cytoplasm</location>
    </subcellularLocation>
</comment>
<comment type="PTM">
    <text evidence="1">Phosphorylated by VraS. Phosphorylation state of VraR controls dimerization of the protein.</text>
</comment>
<comment type="disruption phenotype">
    <text evidence="5 6">Host cells show significantly lower transcriptional levels of autophagy-related genes (PubMed:31214151). In addition, VraS deletion decreases the ability of S.aureus to defend against phagocytosis and killing by host polymorphonuclear leukocytes (PMNs) (PubMed:31009806).</text>
</comment>
<reference key="1">
    <citation type="journal article" date="2000" name="Biochem. Biophys. Res. Commun.">
        <title>Identification of the up- and down-regulated genes in vancomycin-resistant Staphylococcus aureus strains Mu3 and Mu50 by cDNA differential hybridization method.</title>
        <authorList>
            <person name="Kuroda M."/>
            <person name="Kuwahara-Arai K."/>
            <person name="Hiramatsu K."/>
        </authorList>
    </citation>
    <scope>NUCLEOTIDE SEQUENCE [GENOMIC DNA]</scope>
    <scope>FUNCTION</scope>
</reference>
<reference key="2">
    <citation type="journal article" date="2008" name="Antimicrob. Agents Chemother.">
        <title>Mutated response regulator graR is responsible for phenotypic conversion of Staphylococcus aureus from heterogeneous vancomycin-intermediate resistance to vancomycin-intermediate resistance.</title>
        <authorList>
            <person name="Neoh H.-M."/>
            <person name="Cui L."/>
            <person name="Yuzawa H."/>
            <person name="Takeuchi F."/>
            <person name="Matsuo M."/>
            <person name="Hiramatsu K."/>
        </authorList>
    </citation>
    <scope>NUCLEOTIDE SEQUENCE [LARGE SCALE GENOMIC DNA]</scope>
    <source>
        <strain>Mu3 / ATCC 700698</strain>
    </source>
</reference>
<reference key="3">
    <citation type="journal article" date="2019" name="Front. Microbiol.">
        <title>Heterogeneous Vancomycin-Intermediate Staphylococcus aureus uses the VraSR regulatory system to modulate autophagy for increased intracellular survival in macrophage-like cell line RAW264.7.</title>
        <authorList>
            <person name="Dai Y."/>
            <person name="Gao C."/>
            <person name="Chen L."/>
            <person name="Chang W."/>
            <person name="Yu W."/>
            <person name="Ma X."/>
            <person name="Li J."/>
        </authorList>
    </citation>
    <scope>FUNCTION</scope>
    <scope>DISRUPTION PHENOTYPE</scope>
</reference>
<reference key="4">
    <citation type="journal article" date="2019" name="Microbes Infect.">
        <title>VraSR has an important role in immune evasion of Staphylococcus aureus with low level vancomycin resistance.</title>
        <authorList>
            <person name="Gao C."/>
            <person name="Dai Y."/>
            <person name="Chang W."/>
            <person name="Fang C."/>
            <person name="Wang Z."/>
            <person name="Ma X."/>
        </authorList>
    </citation>
    <scope>FUNCTION</scope>
    <scope>DISRUPTION PHENOTYPE</scope>
</reference>
<organism>
    <name type="scientific">Staphylococcus aureus (strain Mu3 / ATCC 700698)</name>
    <dbReference type="NCBI Taxonomy" id="418127"/>
    <lineage>
        <taxon>Bacteria</taxon>
        <taxon>Bacillati</taxon>
        <taxon>Bacillota</taxon>
        <taxon>Bacilli</taxon>
        <taxon>Bacillales</taxon>
        <taxon>Staphylococcaceae</taxon>
        <taxon>Staphylococcus</taxon>
    </lineage>
</organism>
<sequence>MTIKVLFVDDHEMVRIGISSYLSTQSDIEVVGEGASGKEAIAKAHELKPDLILMDLLMEDMDGVEATTQIKKDLPQIKVLMLTSFIEDKEVYRALDAGVDSYILKTTSAKDIADAVRKTSRGESVFEPEVLVKMRNRMKKRAELYEMLTEREMEILLLIAKGYSNQEIASASHITIKTVKTHVSNILSKLEVQDRTQAVIYAFQHNLIQ</sequence>
<accession>P0C0Z1</accession>
<accession>A7X405</accession>
<accession>Q9KWK7</accession>
<gene>
    <name type="primary">vraR</name>
    <name type="ordered locus">SAHV_1869</name>
</gene>
<evidence type="ECO:0000250" key="1">
    <source>
        <dbReference type="UniProtKB" id="Q7A2Q1"/>
    </source>
</evidence>
<evidence type="ECO:0000255" key="2">
    <source>
        <dbReference type="PROSITE-ProRule" id="PRU00169"/>
    </source>
</evidence>
<evidence type="ECO:0000255" key="3">
    <source>
        <dbReference type="PROSITE-ProRule" id="PRU00411"/>
    </source>
</evidence>
<evidence type="ECO:0000269" key="4">
    <source>
    </source>
</evidence>
<evidence type="ECO:0000269" key="5">
    <source>
    </source>
</evidence>
<evidence type="ECO:0000269" key="6">
    <source>
    </source>
</evidence>
<evidence type="ECO:0000305" key="7"/>
<proteinExistence type="inferred from homology"/>